<gene>
    <name evidence="1" type="primary">secA</name>
    <name type="ordered locus">STH125</name>
</gene>
<sequence length="903" mass="102376">MALKILERIFGDYSAKVVKRHQRTVALINSLEPEMQKLSDAELAHKTVEFKERIARGETLEQILPEAFAVVREASIRTTGRRPFDVQLIGGIVLHEGNIAEMKTGEGKTLVAAMPLYLNALLGRGCHLVTVNDYLAKVGRDDIGRIYRFLGMSCGLIVHGLTSAQRREAYNCDITYGTNNEFGFDYLRDNMAMHPQDMVHREFFYAIVDEADSILIDEARTPLIISGPSGKPAEMYYTFAKIAERLKRDEDYIVEEKEKRVAPTEEGIAKVEKWLNVDHLYEGENQQLVHYLNNAIKAKELFHRDRDYVVKDGQVIIVDEFTGRLMFGRRWSDGLHQAVEAKEGVKIEEETQTLATITFQNYFRMYKKLAGMTGTALTEEEEFRKIYGLDVIAIPTNKPMIRIDHPDVVYKTVKAKFKAVADDVEERHKRGQPVLVGTVSIEKSEYLSQILTRRGIPHQVLNAKHHEREAEIVAQAGRFGAVTIATNMAGRGTDILLGGNPDFAARQRMRAEGYAPELIVAATDIIPSQDPEVQAAREVYLQYLKEEEAKCAEEAEKVRAVGGLCVIGTERHEARRIDNQLRGRAGRQGDPGESRFYVSLEDDLMRLFGGEMVQNLMNKLGIEDDVPIDSPMVSRAIENAQKKVEARNFDIRKHVLQYDDVMNTQRELIYKQRRQILEGHDTREVVLDAIAATAQSIVEEGVPEDVYFEEWDPSILVALAEDNGIPKGAVNVEDLKAAVEGVRREQEGREKLAKVIEQAAIRAYEEKEARLGAETMRQLERFLLLRTVDEKWMDHLDAMDDLREGVGLRAYGQRDPLIEYKMEAMEMFNNMIRSIQRDMVRNLFIFEVVREPQRPRIMIESGSQGAAPRQPVRAEGKKVGRNDPCPCGSGKKYKFCCGRAANA</sequence>
<dbReference type="EC" id="7.4.2.8" evidence="1"/>
<dbReference type="EMBL" id="AP006840">
    <property type="protein sequence ID" value="BAD39110.1"/>
    <property type="molecule type" value="Genomic_DNA"/>
</dbReference>
<dbReference type="RefSeq" id="WP_011194260.1">
    <property type="nucleotide sequence ID" value="NC_006177.1"/>
</dbReference>
<dbReference type="SMR" id="Q67T83"/>
<dbReference type="STRING" id="292459.STH125"/>
<dbReference type="KEGG" id="sth:STH125"/>
<dbReference type="eggNOG" id="COG0653">
    <property type="taxonomic scope" value="Bacteria"/>
</dbReference>
<dbReference type="HOGENOM" id="CLU_005314_3_0_9"/>
<dbReference type="OrthoDB" id="9805579at2"/>
<dbReference type="Proteomes" id="UP000000417">
    <property type="component" value="Chromosome"/>
</dbReference>
<dbReference type="GO" id="GO:0031522">
    <property type="term" value="C:cell envelope Sec protein transport complex"/>
    <property type="evidence" value="ECO:0007669"/>
    <property type="project" value="TreeGrafter"/>
</dbReference>
<dbReference type="GO" id="GO:0005829">
    <property type="term" value="C:cytosol"/>
    <property type="evidence" value="ECO:0007669"/>
    <property type="project" value="TreeGrafter"/>
</dbReference>
<dbReference type="GO" id="GO:0005886">
    <property type="term" value="C:plasma membrane"/>
    <property type="evidence" value="ECO:0007669"/>
    <property type="project" value="UniProtKB-SubCell"/>
</dbReference>
<dbReference type="GO" id="GO:0005524">
    <property type="term" value="F:ATP binding"/>
    <property type="evidence" value="ECO:0007669"/>
    <property type="project" value="UniProtKB-UniRule"/>
</dbReference>
<dbReference type="GO" id="GO:0046872">
    <property type="term" value="F:metal ion binding"/>
    <property type="evidence" value="ECO:0007669"/>
    <property type="project" value="UniProtKB-KW"/>
</dbReference>
<dbReference type="GO" id="GO:0008564">
    <property type="term" value="F:protein-exporting ATPase activity"/>
    <property type="evidence" value="ECO:0007669"/>
    <property type="project" value="UniProtKB-EC"/>
</dbReference>
<dbReference type="GO" id="GO:0065002">
    <property type="term" value="P:intracellular protein transmembrane transport"/>
    <property type="evidence" value="ECO:0007669"/>
    <property type="project" value="UniProtKB-UniRule"/>
</dbReference>
<dbReference type="GO" id="GO:0017038">
    <property type="term" value="P:protein import"/>
    <property type="evidence" value="ECO:0007669"/>
    <property type="project" value="InterPro"/>
</dbReference>
<dbReference type="GO" id="GO:0006605">
    <property type="term" value="P:protein targeting"/>
    <property type="evidence" value="ECO:0007669"/>
    <property type="project" value="UniProtKB-UniRule"/>
</dbReference>
<dbReference type="GO" id="GO:0043952">
    <property type="term" value="P:protein transport by the Sec complex"/>
    <property type="evidence" value="ECO:0007669"/>
    <property type="project" value="TreeGrafter"/>
</dbReference>
<dbReference type="CDD" id="cd17928">
    <property type="entry name" value="DEXDc_SecA"/>
    <property type="match status" value="1"/>
</dbReference>
<dbReference type="CDD" id="cd18803">
    <property type="entry name" value="SF2_C_secA"/>
    <property type="match status" value="1"/>
</dbReference>
<dbReference type="FunFam" id="3.40.50.300:FF:000113">
    <property type="entry name" value="Preprotein translocase subunit SecA"/>
    <property type="match status" value="1"/>
</dbReference>
<dbReference type="FunFam" id="1.10.3060.10:FF:000003">
    <property type="entry name" value="Protein translocase subunit SecA"/>
    <property type="match status" value="1"/>
</dbReference>
<dbReference type="FunFam" id="3.90.1440.10:FF:000002">
    <property type="entry name" value="Protein translocase subunit SecA"/>
    <property type="match status" value="1"/>
</dbReference>
<dbReference type="Gene3D" id="1.10.3060.10">
    <property type="entry name" value="Helical scaffold and wing domains of SecA"/>
    <property type="match status" value="1"/>
</dbReference>
<dbReference type="Gene3D" id="3.40.50.300">
    <property type="entry name" value="P-loop containing nucleotide triphosphate hydrolases"/>
    <property type="match status" value="2"/>
</dbReference>
<dbReference type="Gene3D" id="3.90.1440.10">
    <property type="entry name" value="SecA, preprotein cross-linking domain"/>
    <property type="match status" value="1"/>
</dbReference>
<dbReference type="HAMAP" id="MF_01382">
    <property type="entry name" value="SecA"/>
    <property type="match status" value="1"/>
</dbReference>
<dbReference type="InterPro" id="IPR014001">
    <property type="entry name" value="Helicase_ATP-bd"/>
</dbReference>
<dbReference type="InterPro" id="IPR027417">
    <property type="entry name" value="P-loop_NTPase"/>
</dbReference>
<dbReference type="InterPro" id="IPR004027">
    <property type="entry name" value="SEC_C_motif"/>
</dbReference>
<dbReference type="InterPro" id="IPR000185">
    <property type="entry name" value="SecA"/>
</dbReference>
<dbReference type="InterPro" id="IPR020937">
    <property type="entry name" value="SecA_CS"/>
</dbReference>
<dbReference type="InterPro" id="IPR011115">
    <property type="entry name" value="SecA_DEAD"/>
</dbReference>
<dbReference type="InterPro" id="IPR014018">
    <property type="entry name" value="SecA_motor_DEAD"/>
</dbReference>
<dbReference type="InterPro" id="IPR011130">
    <property type="entry name" value="SecA_preprotein_X-link_dom"/>
</dbReference>
<dbReference type="InterPro" id="IPR044722">
    <property type="entry name" value="SecA_SF2_C"/>
</dbReference>
<dbReference type="InterPro" id="IPR011116">
    <property type="entry name" value="SecA_Wing/Scaffold"/>
</dbReference>
<dbReference type="InterPro" id="IPR036266">
    <property type="entry name" value="SecA_Wing/Scaffold_sf"/>
</dbReference>
<dbReference type="InterPro" id="IPR036670">
    <property type="entry name" value="SecA_X-link_sf"/>
</dbReference>
<dbReference type="NCBIfam" id="NF009538">
    <property type="entry name" value="PRK12904.1"/>
    <property type="match status" value="1"/>
</dbReference>
<dbReference type="NCBIfam" id="TIGR00963">
    <property type="entry name" value="secA"/>
    <property type="match status" value="1"/>
</dbReference>
<dbReference type="PANTHER" id="PTHR30612:SF0">
    <property type="entry name" value="CHLOROPLAST PROTEIN-TRANSPORTING ATPASE"/>
    <property type="match status" value="1"/>
</dbReference>
<dbReference type="PANTHER" id="PTHR30612">
    <property type="entry name" value="SECA INNER MEMBRANE COMPONENT OF SEC PROTEIN SECRETION SYSTEM"/>
    <property type="match status" value="1"/>
</dbReference>
<dbReference type="Pfam" id="PF21090">
    <property type="entry name" value="P-loop_SecA"/>
    <property type="match status" value="1"/>
</dbReference>
<dbReference type="Pfam" id="PF02810">
    <property type="entry name" value="SEC-C"/>
    <property type="match status" value="1"/>
</dbReference>
<dbReference type="Pfam" id="PF07517">
    <property type="entry name" value="SecA_DEAD"/>
    <property type="match status" value="1"/>
</dbReference>
<dbReference type="Pfam" id="PF01043">
    <property type="entry name" value="SecA_PP_bind"/>
    <property type="match status" value="1"/>
</dbReference>
<dbReference type="Pfam" id="PF07516">
    <property type="entry name" value="SecA_SW"/>
    <property type="match status" value="1"/>
</dbReference>
<dbReference type="PRINTS" id="PR00906">
    <property type="entry name" value="SECA"/>
</dbReference>
<dbReference type="SMART" id="SM00957">
    <property type="entry name" value="SecA_DEAD"/>
    <property type="match status" value="1"/>
</dbReference>
<dbReference type="SMART" id="SM00958">
    <property type="entry name" value="SecA_PP_bind"/>
    <property type="match status" value="1"/>
</dbReference>
<dbReference type="SUPFAM" id="SSF81886">
    <property type="entry name" value="Helical scaffold and wing domains of SecA"/>
    <property type="match status" value="1"/>
</dbReference>
<dbReference type="SUPFAM" id="SSF52540">
    <property type="entry name" value="P-loop containing nucleoside triphosphate hydrolases"/>
    <property type="match status" value="2"/>
</dbReference>
<dbReference type="SUPFAM" id="SSF81767">
    <property type="entry name" value="Pre-protein crosslinking domain of SecA"/>
    <property type="match status" value="1"/>
</dbReference>
<dbReference type="PROSITE" id="PS01312">
    <property type="entry name" value="SECA"/>
    <property type="match status" value="1"/>
</dbReference>
<dbReference type="PROSITE" id="PS51196">
    <property type="entry name" value="SECA_MOTOR_DEAD"/>
    <property type="match status" value="1"/>
</dbReference>
<accession>Q67T83</accession>
<feature type="chain" id="PRO_0000318465" description="Protein translocase subunit SecA">
    <location>
        <begin position="1"/>
        <end position="903"/>
    </location>
</feature>
<feature type="region of interest" description="Disordered" evidence="2">
    <location>
        <begin position="861"/>
        <end position="883"/>
    </location>
</feature>
<feature type="compositionally biased region" description="Basic and acidic residues" evidence="2">
    <location>
        <begin position="872"/>
        <end position="881"/>
    </location>
</feature>
<feature type="binding site" evidence="1">
    <location>
        <position position="87"/>
    </location>
    <ligand>
        <name>ATP</name>
        <dbReference type="ChEBI" id="CHEBI:30616"/>
    </ligand>
</feature>
<feature type="binding site" evidence="1">
    <location>
        <begin position="105"/>
        <end position="109"/>
    </location>
    <ligand>
        <name>ATP</name>
        <dbReference type="ChEBI" id="CHEBI:30616"/>
    </ligand>
</feature>
<feature type="binding site" evidence="1">
    <location>
        <position position="494"/>
    </location>
    <ligand>
        <name>ATP</name>
        <dbReference type="ChEBI" id="CHEBI:30616"/>
    </ligand>
</feature>
<feature type="binding site" evidence="1">
    <location>
        <position position="885"/>
    </location>
    <ligand>
        <name>Zn(2+)</name>
        <dbReference type="ChEBI" id="CHEBI:29105"/>
    </ligand>
</feature>
<feature type="binding site" evidence="1">
    <location>
        <position position="887"/>
    </location>
    <ligand>
        <name>Zn(2+)</name>
        <dbReference type="ChEBI" id="CHEBI:29105"/>
    </ligand>
</feature>
<feature type="binding site" evidence="1">
    <location>
        <position position="896"/>
    </location>
    <ligand>
        <name>Zn(2+)</name>
        <dbReference type="ChEBI" id="CHEBI:29105"/>
    </ligand>
</feature>
<feature type="binding site" evidence="1">
    <location>
        <position position="897"/>
    </location>
    <ligand>
        <name>Zn(2+)</name>
        <dbReference type="ChEBI" id="CHEBI:29105"/>
    </ligand>
</feature>
<proteinExistence type="inferred from homology"/>
<name>SECA_SYMTH</name>
<organism>
    <name type="scientific">Symbiobacterium thermophilum (strain DSM 24528 / JCM 14929 / IAM 14863 / T)</name>
    <dbReference type="NCBI Taxonomy" id="292459"/>
    <lineage>
        <taxon>Bacteria</taxon>
        <taxon>Bacillati</taxon>
        <taxon>Bacillota</taxon>
        <taxon>Clostridia</taxon>
        <taxon>Eubacteriales</taxon>
        <taxon>Symbiobacteriaceae</taxon>
        <taxon>Symbiobacterium</taxon>
    </lineage>
</organism>
<keyword id="KW-0067">ATP-binding</keyword>
<keyword id="KW-1003">Cell membrane</keyword>
<keyword id="KW-0963">Cytoplasm</keyword>
<keyword id="KW-0472">Membrane</keyword>
<keyword id="KW-0479">Metal-binding</keyword>
<keyword id="KW-0547">Nucleotide-binding</keyword>
<keyword id="KW-0653">Protein transport</keyword>
<keyword id="KW-1185">Reference proteome</keyword>
<keyword id="KW-1278">Translocase</keyword>
<keyword id="KW-0811">Translocation</keyword>
<keyword id="KW-0813">Transport</keyword>
<keyword id="KW-0862">Zinc</keyword>
<reference key="1">
    <citation type="journal article" date="2004" name="Nucleic Acids Res.">
        <title>Genome sequence of Symbiobacterium thermophilum, an uncultivable bacterium that depends on microbial commensalism.</title>
        <authorList>
            <person name="Ueda K."/>
            <person name="Yamashita A."/>
            <person name="Ishikawa J."/>
            <person name="Shimada M."/>
            <person name="Watsuji T."/>
            <person name="Morimura K."/>
            <person name="Ikeda H."/>
            <person name="Hattori M."/>
            <person name="Beppu T."/>
        </authorList>
    </citation>
    <scope>NUCLEOTIDE SEQUENCE [LARGE SCALE GENOMIC DNA]</scope>
    <source>
        <strain>DSM 24528 / JCM 14929 / IAM 14863 / T</strain>
    </source>
</reference>
<comment type="function">
    <text evidence="1">Part of the Sec protein translocase complex. Interacts with the SecYEG preprotein conducting channel. Has a central role in coupling the hydrolysis of ATP to the transfer of proteins into and across the cell membrane, serving as an ATP-driven molecular motor driving the stepwise translocation of polypeptide chains across the membrane.</text>
</comment>
<comment type="catalytic activity">
    <reaction evidence="1">
        <text>ATP + H2O + cellular proteinSide 1 = ADP + phosphate + cellular proteinSide 2.</text>
        <dbReference type="EC" id="7.4.2.8"/>
    </reaction>
</comment>
<comment type="cofactor">
    <cofactor evidence="1">
        <name>Zn(2+)</name>
        <dbReference type="ChEBI" id="CHEBI:29105"/>
    </cofactor>
    <text evidence="1">May bind 1 zinc ion per subunit.</text>
</comment>
<comment type="subunit">
    <text evidence="1">Monomer and homodimer. Part of the essential Sec protein translocation apparatus which comprises SecA, SecYEG and auxiliary proteins SecDF. Other proteins may also be involved.</text>
</comment>
<comment type="subcellular location">
    <subcellularLocation>
        <location evidence="1">Cell membrane</location>
        <topology evidence="1">Peripheral membrane protein</topology>
        <orientation evidence="1">Cytoplasmic side</orientation>
    </subcellularLocation>
    <subcellularLocation>
        <location evidence="1">Cytoplasm</location>
    </subcellularLocation>
    <text evidence="1">Distribution is 50-50.</text>
</comment>
<comment type="similarity">
    <text evidence="1">Belongs to the SecA family.</text>
</comment>
<protein>
    <recommendedName>
        <fullName evidence="1">Protein translocase subunit SecA</fullName>
        <ecNumber evidence="1">7.4.2.8</ecNumber>
    </recommendedName>
</protein>
<evidence type="ECO:0000255" key="1">
    <source>
        <dbReference type="HAMAP-Rule" id="MF_01382"/>
    </source>
</evidence>
<evidence type="ECO:0000256" key="2">
    <source>
        <dbReference type="SAM" id="MobiDB-lite"/>
    </source>
</evidence>